<name>YTNM_BACSU</name>
<gene>
    <name type="primary">ytnM</name>
    <name type="ordered locus">BSU29280</name>
</gene>
<sequence length="300" mass="31787">MKKLIVFAFIGLLSQLIDGSLGMAYGVTSTSLLLAFGITPAVASASVHLAEVVTTAASGVSHIKFGNVDKQTVYQLVIPGSIGAFLGAAFLSQLPGDVAKPYISLFLLLLGGYVLIRFLFQYKPALEKKHVPLNRKQSIPLGVIAGFADATGGGGWGPVTTPILLSRKGLSPRKVVGTVDTSEFAIAVSATAGFLISLGWEDVNWLWVFSLMAGGIIAAPIAAWLVQKFHPQLMGVLVGGFIILVNARTLINEWIANTAVHPLIYTAIGAIWLSAVLFVLSKIGNRNIVKTAVDVHLKEK</sequence>
<keyword id="KW-1003">Cell membrane</keyword>
<keyword id="KW-0472">Membrane</keyword>
<keyword id="KW-1185">Reference proteome</keyword>
<keyword id="KW-0812">Transmembrane</keyword>
<keyword id="KW-1133">Transmembrane helix</keyword>
<keyword id="KW-0813">Transport</keyword>
<dbReference type="EMBL" id="AF008220">
    <property type="protein sequence ID" value="AAC00335.1"/>
    <property type="molecule type" value="Genomic_DNA"/>
</dbReference>
<dbReference type="EMBL" id="AL009126">
    <property type="protein sequence ID" value="CAB14888.1"/>
    <property type="molecule type" value="Genomic_DNA"/>
</dbReference>
<dbReference type="PIR" id="F69997">
    <property type="entry name" value="F69997"/>
</dbReference>
<dbReference type="RefSeq" id="NP_390806.1">
    <property type="nucleotide sequence ID" value="NC_000964.3"/>
</dbReference>
<dbReference type="RefSeq" id="WP_003246070.1">
    <property type="nucleotide sequence ID" value="NZ_OZ025638.1"/>
</dbReference>
<dbReference type="FunCoup" id="O34430">
    <property type="interactions" value="107"/>
</dbReference>
<dbReference type="STRING" id="224308.BSU29280"/>
<dbReference type="PaxDb" id="224308-BSU29280"/>
<dbReference type="EnsemblBacteria" id="CAB14888">
    <property type="protein sequence ID" value="CAB14888"/>
    <property type="gene ID" value="BSU_29280"/>
</dbReference>
<dbReference type="GeneID" id="937366"/>
<dbReference type="KEGG" id="bsu:BSU29280"/>
<dbReference type="PATRIC" id="fig|224308.179.peg.3182"/>
<dbReference type="eggNOG" id="COG0730">
    <property type="taxonomic scope" value="Bacteria"/>
</dbReference>
<dbReference type="InParanoid" id="O34430"/>
<dbReference type="OrthoDB" id="45564at2"/>
<dbReference type="PhylomeDB" id="O34430"/>
<dbReference type="BioCyc" id="BSUB:BSU29280-MONOMER"/>
<dbReference type="Proteomes" id="UP000001570">
    <property type="component" value="Chromosome"/>
</dbReference>
<dbReference type="GO" id="GO:0005886">
    <property type="term" value="C:plasma membrane"/>
    <property type="evidence" value="ECO:0007669"/>
    <property type="project" value="UniProtKB-SubCell"/>
</dbReference>
<dbReference type="InterPro" id="IPR002781">
    <property type="entry name" value="TM_pro_TauE-like"/>
</dbReference>
<dbReference type="InterPro" id="IPR051598">
    <property type="entry name" value="TSUP/Inactive_protease-like"/>
</dbReference>
<dbReference type="PANTHER" id="PTHR43701">
    <property type="entry name" value="MEMBRANE TRANSPORTER PROTEIN MJ0441-RELATED"/>
    <property type="match status" value="1"/>
</dbReference>
<dbReference type="PANTHER" id="PTHR43701:SF12">
    <property type="entry name" value="MEMBRANE TRANSPORTER PROTEIN YTNM-RELATED"/>
    <property type="match status" value="1"/>
</dbReference>
<dbReference type="Pfam" id="PF01925">
    <property type="entry name" value="TauE"/>
    <property type="match status" value="1"/>
</dbReference>
<accession>O34430</accession>
<accession>Q795U9</accession>
<reference key="1">
    <citation type="journal article" date="1997" name="Microbiology">
        <title>Sequencing and functional annotation of the Bacillus subtilis genes in the 200 kb rrnB-dnaB region.</title>
        <authorList>
            <person name="Lapidus A."/>
            <person name="Galleron N."/>
            <person name="Sorokin A."/>
            <person name="Ehrlich S.D."/>
        </authorList>
    </citation>
    <scope>NUCLEOTIDE SEQUENCE [GENOMIC DNA]</scope>
    <source>
        <strain>168</strain>
    </source>
</reference>
<reference key="2">
    <citation type="journal article" date="1997" name="Nature">
        <title>The complete genome sequence of the Gram-positive bacterium Bacillus subtilis.</title>
        <authorList>
            <person name="Kunst F."/>
            <person name="Ogasawara N."/>
            <person name="Moszer I."/>
            <person name="Albertini A.M."/>
            <person name="Alloni G."/>
            <person name="Azevedo V."/>
            <person name="Bertero M.G."/>
            <person name="Bessieres P."/>
            <person name="Bolotin A."/>
            <person name="Borchert S."/>
            <person name="Borriss R."/>
            <person name="Boursier L."/>
            <person name="Brans A."/>
            <person name="Braun M."/>
            <person name="Brignell S.C."/>
            <person name="Bron S."/>
            <person name="Brouillet S."/>
            <person name="Bruschi C.V."/>
            <person name="Caldwell B."/>
            <person name="Capuano V."/>
            <person name="Carter N.M."/>
            <person name="Choi S.-K."/>
            <person name="Codani J.-J."/>
            <person name="Connerton I.F."/>
            <person name="Cummings N.J."/>
            <person name="Daniel R.A."/>
            <person name="Denizot F."/>
            <person name="Devine K.M."/>
            <person name="Duesterhoeft A."/>
            <person name="Ehrlich S.D."/>
            <person name="Emmerson P.T."/>
            <person name="Entian K.-D."/>
            <person name="Errington J."/>
            <person name="Fabret C."/>
            <person name="Ferrari E."/>
            <person name="Foulger D."/>
            <person name="Fritz C."/>
            <person name="Fujita M."/>
            <person name="Fujita Y."/>
            <person name="Fuma S."/>
            <person name="Galizzi A."/>
            <person name="Galleron N."/>
            <person name="Ghim S.-Y."/>
            <person name="Glaser P."/>
            <person name="Goffeau A."/>
            <person name="Golightly E.J."/>
            <person name="Grandi G."/>
            <person name="Guiseppi G."/>
            <person name="Guy B.J."/>
            <person name="Haga K."/>
            <person name="Haiech J."/>
            <person name="Harwood C.R."/>
            <person name="Henaut A."/>
            <person name="Hilbert H."/>
            <person name="Holsappel S."/>
            <person name="Hosono S."/>
            <person name="Hullo M.-F."/>
            <person name="Itaya M."/>
            <person name="Jones L.-M."/>
            <person name="Joris B."/>
            <person name="Karamata D."/>
            <person name="Kasahara Y."/>
            <person name="Klaerr-Blanchard M."/>
            <person name="Klein C."/>
            <person name="Kobayashi Y."/>
            <person name="Koetter P."/>
            <person name="Koningstein G."/>
            <person name="Krogh S."/>
            <person name="Kumano M."/>
            <person name="Kurita K."/>
            <person name="Lapidus A."/>
            <person name="Lardinois S."/>
            <person name="Lauber J."/>
            <person name="Lazarevic V."/>
            <person name="Lee S.-M."/>
            <person name="Levine A."/>
            <person name="Liu H."/>
            <person name="Masuda S."/>
            <person name="Mauel C."/>
            <person name="Medigue C."/>
            <person name="Medina N."/>
            <person name="Mellado R.P."/>
            <person name="Mizuno M."/>
            <person name="Moestl D."/>
            <person name="Nakai S."/>
            <person name="Noback M."/>
            <person name="Noone D."/>
            <person name="O'Reilly M."/>
            <person name="Ogawa K."/>
            <person name="Ogiwara A."/>
            <person name="Oudega B."/>
            <person name="Park S.-H."/>
            <person name="Parro V."/>
            <person name="Pohl T.M."/>
            <person name="Portetelle D."/>
            <person name="Porwollik S."/>
            <person name="Prescott A.M."/>
            <person name="Presecan E."/>
            <person name="Pujic P."/>
            <person name="Purnelle B."/>
            <person name="Rapoport G."/>
            <person name="Rey M."/>
            <person name="Reynolds S."/>
            <person name="Rieger M."/>
            <person name="Rivolta C."/>
            <person name="Rocha E."/>
            <person name="Roche B."/>
            <person name="Rose M."/>
            <person name="Sadaie Y."/>
            <person name="Sato T."/>
            <person name="Scanlan E."/>
            <person name="Schleich S."/>
            <person name="Schroeter R."/>
            <person name="Scoffone F."/>
            <person name="Sekiguchi J."/>
            <person name="Sekowska A."/>
            <person name="Seror S.J."/>
            <person name="Serror P."/>
            <person name="Shin B.-S."/>
            <person name="Soldo B."/>
            <person name="Sorokin A."/>
            <person name="Tacconi E."/>
            <person name="Takagi T."/>
            <person name="Takahashi H."/>
            <person name="Takemaru K."/>
            <person name="Takeuchi M."/>
            <person name="Tamakoshi A."/>
            <person name="Tanaka T."/>
            <person name="Terpstra P."/>
            <person name="Tognoni A."/>
            <person name="Tosato V."/>
            <person name="Uchiyama S."/>
            <person name="Vandenbol M."/>
            <person name="Vannier F."/>
            <person name="Vassarotti A."/>
            <person name="Viari A."/>
            <person name="Wambutt R."/>
            <person name="Wedler E."/>
            <person name="Wedler H."/>
            <person name="Weitzenegger T."/>
            <person name="Winters P."/>
            <person name="Wipat A."/>
            <person name="Yamamoto H."/>
            <person name="Yamane K."/>
            <person name="Yasumoto K."/>
            <person name="Yata K."/>
            <person name="Yoshida K."/>
            <person name="Yoshikawa H.-F."/>
            <person name="Zumstein E."/>
            <person name="Yoshikawa H."/>
            <person name="Danchin A."/>
        </authorList>
    </citation>
    <scope>NUCLEOTIDE SEQUENCE [LARGE SCALE GENOMIC DNA]</scope>
    <source>
        <strain>168</strain>
    </source>
</reference>
<evidence type="ECO:0000255" key="1"/>
<evidence type="ECO:0000305" key="2"/>
<proteinExistence type="inferred from homology"/>
<organism>
    <name type="scientific">Bacillus subtilis (strain 168)</name>
    <dbReference type="NCBI Taxonomy" id="224308"/>
    <lineage>
        <taxon>Bacteria</taxon>
        <taxon>Bacillati</taxon>
        <taxon>Bacillota</taxon>
        <taxon>Bacilli</taxon>
        <taxon>Bacillales</taxon>
        <taxon>Bacillaceae</taxon>
        <taxon>Bacillus</taxon>
    </lineage>
</organism>
<protein>
    <recommendedName>
        <fullName>Probable membrane transporter protein YtnM</fullName>
    </recommendedName>
</protein>
<feature type="chain" id="PRO_0000377716" description="Probable membrane transporter protein YtnM">
    <location>
        <begin position="1"/>
        <end position="300"/>
    </location>
</feature>
<feature type="transmembrane region" description="Helical" evidence="1">
    <location>
        <begin position="4"/>
        <end position="24"/>
    </location>
</feature>
<feature type="transmembrane region" description="Helical" evidence="1">
    <location>
        <begin position="33"/>
        <end position="53"/>
    </location>
</feature>
<feature type="transmembrane region" description="Helical" evidence="1">
    <location>
        <begin position="76"/>
        <end position="96"/>
    </location>
</feature>
<feature type="transmembrane region" description="Helical" evidence="1">
    <location>
        <begin position="102"/>
        <end position="122"/>
    </location>
</feature>
<feature type="transmembrane region" description="Helical" evidence="1">
    <location>
        <begin position="139"/>
        <end position="159"/>
    </location>
</feature>
<feature type="transmembrane region" description="Helical" evidence="1">
    <location>
        <begin position="206"/>
        <end position="226"/>
    </location>
</feature>
<feature type="transmembrane region" description="Helical" evidence="1">
    <location>
        <begin position="231"/>
        <end position="251"/>
    </location>
</feature>
<feature type="transmembrane region" description="Helical" evidence="1">
    <location>
        <begin position="260"/>
        <end position="280"/>
    </location>
</feature>
<comment type="subcellular location">
    <subcellularLocation>
        <location evidence="2">Cell membrane</location>
        <topology evidence="2">Multi-pass membrane protein</topology>
    </subcellularLocation>
</comment>
<comment type="similarity">
    <text evidence="2">Belongs to the 4-toluene sulfonate uptake permease (TSUP) (TC 2.A.102) family.</text>
</comment>